<accession>C3LRP2</accession>
<gene>
    <name evidence="1" type="primary">rplR</name>
    <name type="ordered locus">VCM66_2500</name>
</gene>
<keyword id="KW-0687">Ribonucleoprotein</keyword>
<keyword id="KW-0689">Ribosomal protein</keyword>
<keyword id="KW-0694">RNA-binding</keyword>
<keyword id="KW-0699">rRNA-binding</keyword>
<sequence>MDKKASRIRRATRARRKIAELGATRLVVHRTPRHVYAQVIAANGSEVIAAASTVEKAIREQVKYTGNIDAAKAVGKAVAERALEKGVTVVAFDRSGFQYHGRVAALADSAREAGLKF</sequence>
<dbReference type="EMBL" id="CP001233">
    <property type="protein sequence ID" value="ACP06797.1"/>
    <property type="molecule type" value="Genomic_DNA"/>
</dbReference>
<dbReference type="RefSeq" id="WP_000358092.1">
    <property type="nucleotide sequence ID" value="NC_012578.1"/>
</dbReference>
<dbReference type="SMR" id="C3LRP2"/>
<dbReference type="GeneID" id="94012768"/>
<dbReference type="KEGG" id="vcm:VCM66_2500"/>
<dbReference type="HOGENOM" id="CLU_098841_0_1_6"/>
<dbReference type="Proteomes" id="UP000001217">
    <property type="component" value="Chromosome I"/>
</dbReference>
<dbReference type="GO" id="GO:0022625">
    <property type="term" value="C:cytosolic large ribosomal subunit"/>
    <property type="evidence" value="ECO:0007669"/>
    <property type="project" value="TreeGrafter"/>
</dbReference>
<dbReference type="GO" id="GO:0008097">
    <property type="term" value="F:5S rRNA binding"/>
    <property type="evidence" value="ECO:0007669"/>
    <property type="project" value="TreeGrafter"/>
</dbReference>
<dbReference type="GO" id="GO:0003735">
    <property type="term" value="F:structural constituent of ribosome"/>
    <property type="evidence" value="ECO:0007669"/>
    <property type="project" value="InterPro"/>
</dbReference>
<dbReference type="GO" id="GO:0006412">
    <property type="term" value="P:translation"/>
    <property type="evidence" value="ECO:0007669"/>
    <property type="project" value="UniProtKB-UniRule"/>
</dbReference>
<dbReference type="CDD" id="cd00432">
    <property type="entry name" value="Ribosomal_L18_L5e"/>
    <property type="match status" value="1"/>
</dbReference>
<dbReference type="FunFam" id="3.30.420.100:FF:000001">
    <property type="entry name" value="50S ribosomal protein L18"/>
    <property type="match status" value="1"/>
</dbReference>
<dbReference type="Gene3D" id="3.30.420.100">
    <property type="match status" value="1"/>
</dbReference>
<dbReference type="HAMAP" id="MF_01337_B">
    <property type="entry name" value="Ribosomal_uL18_B"/>
    <property type="match status" value="1"/>
</dbReference>
<dbReference type="InterPro" id="IPR004389">
    <property type="entry name" value="Ribosomal_uL18_bac-type"/>
</dbReference>
<dbReference type="InterPro" id="IPR005484">
    <property type="entry name" value="Ribosomal_uL18_bac/euk"/>
</dbReference>
<dbReference type="NCBIfam" id="TIGR00060">
    <property type="entry name" value="L18_bact"/>
    <property type="match status" value="1"/>
</dbReference>
<dbReference type="PANTHER" id="PTHR12899">
    <property type="entry name" value="39S RIBOSOMAL PROTEIN L18, MITOCHONDRIAL"/>
    <property type="match status" value="1"/>
</dbReference>
<dbReference type="PANTHER" id="PTHR12899:SF3">
    <property type="entry name" value="LARGE RIBOSOMAL SUBUNIT PROTEIN UL18M"/>
    <property type="match status" value="1"/>
</dbReference>
<dbReference type="Pfam" id="PF00861">
    <property type="entry name" value="Ribosomal_L18p"/>
    <property type="match status" value="1"/>
</dbReference>
<dbReference type="SUPFAM" id="SSF53137">
    <property type="entry name" value="Translational machinery components"/>
    <property type="match status" value="1"/>
</dbReference>
<name>RL18_VIBCM</name>
<comment type="function">
    <text evidence="1">This is one of the proteins that bind and probably mediate the attachment of the 5S RNA into the large ribosomal subunit, where it forms part of the central protuberance.</text>
</comment>
<comment type="subunit">
    <text evidence="1">Part of the 50S ribosomal subunit; part of the 5S rRNA/L5/L18/L25 subcomplex. Contacts the 5S and 23S rRNAs.</text>
</comment>
<comment type="similarity">
    <text evidence="1">Belongs to the universal ribosomal protein uL18 family.</text>
</comment>
<feature type="chain" id="PRO_1000166258" description="Large ribosomal subunit protein uL18">
    <location>
        <begin position="1"/>
        <end position="117"/>
    </location>
</feature>
<organism>
    <name type="scientific">Vibrio cholerae serotype O1 (strain M66-2)</name>
    <dbReference type="NCBI Taxonomy" id="579112"/>
    <lineage>
        <taxon>Bacteria</taxon>
        <taxon>Pseudomonadati</taxon>
        <taxon>Pseudomonadota</taxon>
        <taxon>Gammaproteobacteria</taxon>
        <taxon>Vibrionales</taxon>
        <taxon>Vibrionaceae</taxon>
        <taxon>Vibrio</taxon>
    </lineage>
</organism>
<protein>
    <recommendedName>
        <fullName evidence="1">Large ribosomal subunit protein uL18</fullName>
    </recommendedName>
    <alternativeName>
        <fullName evidence="2">50S ribosomal protein L18</fullName>
    </alternativeName>
</protein>
<evidence type="ECO:0000255" key="1">
    <source>
        <dbReference type="HAMAP-Rule" id="MF_01337"/>
    </source>
</evidence>
<evidence type="ECO:0000305" key="2"/>
<reference key="1">
    <citation type="journal article" date="2008" name="PLoS ONE">
        <title>A recalibrated molecular clock and independent origins for the cholera pandemic clones.</title>
        <authorList>
            <person name="Feng L."/>
            <person name="Reeves P.R."/>
            <person name="Lan R."/>
            <person name="Ren Y."/>
            <person name="Gao C."/>
            <person name="Zhou Z."/>
            <person name="Ren Y."/>
            <person name="Cheng J."/>
            <person name="Wang W."/>
            <person name="Wang J."/>
            <person name="Qian W."/>
            <person name="Li D."/>
            <person name="Wang L."/>
        </authorList>
    </citation>
    <scope>NUCLEOTIDE SEQUENCE [LARGE SCALE GENOMIC DNA]</scope>
    <source>
        <strain>M66-2</strain>
    </source>
</reference>
<proteinExistence type="inferred from homology"/>